<evidence type="ECO:0000255" key="1"/>
<evidence type="ECO:0000305" key="2"/>
<keyword id="KW-1003">Cell membrane</keyword>
<keyword id="KW-0472">Membrane</keyword>
<keyword id="KW-1185">Reference proteome</keyword>
<keyword id="KW-0812">Transmembrane</keyword>
<keyword id="KW-1133">Transmembrane helix</keyword>
<sequence length="354" mass="37495">MREFCTKWWKRIATVDMLFIGVLTLLASLFASWLKQFPGFSLFGALIIALLIGMIIQFPIRSAYVGSNDGRKAGVKDAAGLISNKLLRLGIILLGFKLNLAVLFTQGIKCLPIAAVVVTLTIIVCYAIARKLGVDPMLAILTAGGTGICGAAAVMGLAGSIKVPEDKQDEKDNDVTMAVAIVAIMGTVFALLEIALGPLTGMTKDQLGITAGASLHEIAHAVAGGDAFGAVDIATIMKLSRVLMLVFAAIIIAIWWEKKHSEVQSTGKKTVAFPWFMLGFIGASIIGTFVPFVTSITPQLVDFAYIVLGMAMAALGINVNFKAIASKGKKPMLASFLTSILLMCFAAGVAMLFF</sequence>
<gene>
    <name type="ordered locus">BL1094</name>
</gene>
<comment type="subcellular location">
    <subcellularLocation>
        <location evidence="2">Cell membrane</location>
        <topology evidence="2">Multi-pass membrane protein</topology>
    </subcellularLocation>
</comment>
<comment type="similarity">
    <text evidence="2">Belongs to the UPF0324 family.</text>
</comment>
<proteinExistence type="inferred from homology"/>
<name>Y1094_BIFLO</name>
<organism>
    <name type="scientific">Bifidobacterium longum (strain NCC 2705)</name>
    <dbReference type="NCBI Taxonomy" id="206672"/>
    <lineage>
        <taxon>Bacteria</taxon>
        <taxon>Bacillati</taxon>
        <taxon>Actinomycetota</taxon>
        <taxon>Actinomycetes</taxon>
        <taxon>Bifidobacteriales</taxon>
        <taxon>Bifidobacteriaceae</taxon>
        <taxon>Bifidobacterium</taxon>
    </lineage>
</organism>
<reference key="1">
    <citation type="journal article" date="2002" name="Proc. Natl. Acad. Sci. U.S.A.">
        <title>The genome sequence of Bifidobacterium longum reflects its adaptation to the human gastrointestinal tract.</title>
        <authorList>
            <person name="Schell M.A."/>
            <person name="Karmirantzou M."/>
            <person name="Snel B."/>
            <person name="Vilanova D."/>
            <person name="Berger B."/>
            <person name="Pessi G."/>
            <person name="Zwahlen M.-C."/>
            <person name="Desiere F."/>
            <person name="Bork P."/>
            <person name="Delley M."/>
            <person name="Pridmore R.D."/>
            <person name="Arigoni F."/>
        </authorList>
    </citation>
    <scope>NUCLEOTIDE SEQUENCE [LARGE SCALE GENOMIC DNA]</scope>
    <source>
        <strain>NCC 2705</strain>
    </source>
</reference>
<protein>
    <recommendedName>
        <fullName>UPF0324 membrane protein BL1094</fullName>
    </recommendedName>
</protein>
<accession>Q8G5C0</accession>
<feature type="chain" id="PRO_0000157396" description="UPF0324 membrane protein BL1094">
    <location>
        <begin position="1"/>
        <end position="354"/>
    </location>
</feature>
<feature type="transmembrane region" description="Helical" evidence="1">
    <location>
        <begin position="12"/>
        <end position="33"/>
    </location>
</feature>
<feature type="transmembrane region" description="Helical" evidence="1">
    <location>
        <begin position="43"/>
        <end position="65"/>
    </location>
</feature>
<feature type="transmembrane region" description="Helical" evidence="1">
    <location>
        <begin position="86"/>
        <end position="108"/>
    </location>
</feature>
<feature type="transmembrane region" description="Helical" evidence="1">
    <location>
        <begin position="112"/>
        <end position="129"/>
    </location>
</feature>
<feature type="transmembrane region" description="Helical" evidence="1">
    <location>
        <begin position="138"/>
        <end position="160"/>
    </location>
</feature>
<feature type="transmembrane region" description="Helical" evidence="1">
    <location>
        <begin position="175"/>
        <end position="197"/>
    </location>
</feature>
<feature type="transmembrane region" description="Helical" evidence="1">
    <location>
        <begin position="239"/>
        <end position="256"/>
    </location>
</feature>
<feature type="transmembrane region" description="Helical" evidence="1">
    <location>
        <begin position="271"/>
        <end position="293"/>
    </location>
</feature>
<feature type="transmembrane region" description="Helical" evidence="1">
    <location>
        <begin position="300"/>
        <end position="321"/>
    </location>
</feature>
<feature type="transmembrane region" description="Helical" evidence="1">
    <location>
        <begin position="331"/>
        <end position="353"/>
    </location>
</feature>
<dbReference type="EMBL" id="AE014295">
    <property type="protein sequence ID" value="AAN24902.1"/>
    <property type="molecule type" value="Genomic_DNA"/>
</dbReference>
<dbReference type="RefSeq" id="NP_696266.1">
    <property type="nucleotide sequence ID" value="NC_004307.2"/>
</dbReference>
<dbReference type="RefSeq" id="WP_007051199.1">
    <property type="nucleotide sequence ID" value="NC_004307.2"/>
</dbReference>
<dbReference type="EnsemblBacteria" id="AAN24902">
    <property type="protein sequence ID" value="AAN24902"/>
    <property type="gene ID" value="BL1094"/>
</dbReference>
<dbReference type="KEGG" id="blo:BL1094"/>
<dbReference type="PATRIC" id="fig|206672.9.peg.801"/>
<dbReference type="HOGENOM" id="CLU_033541_0_1_11"/>
<dbReference type="OrthoDB" id="9766798at2"/>
<dbReference type="PhylomeDB" id="Q8G5C0"/>
<dbReference type="Proteomes" id="UP000000439">
    <property type="component" value="Chromosome"/>
</dbReference>
<dbReference type="GO" id="GO:0005886">
    <property type="term" value="C:plasma membrane"/>
    <property type="evidence" value="ECO:0007669"/>
    <property type="project" value="UniProtKB-SubCell"/>
</dbReference>
<dbReference type="InterPro" id="IPR018383">
    <property type="entry name" value="UPF0324_pro"/>
</dbReference>
<dbReference type="PANTHER" id="PTHR30106">
    <property type="entry name" value="INNER MEMBRANE PROTEIN YEIH-RELATED"/>
    <property type="match status" value="1"/>
</dbReference>
<dbReference type="PANTHER" id="PTHR30106:SF2">
    <property type="entry name" value="UPF0324 INNER MEMBRANE PROTEIN YEIH"/>
    <property type="match status" value="1"/>
</dbReference>
<dbReference type="Pfam" id="PF03601">
    <property type="entry name" value="Cons_hypoth698"/>
    <property type="match status" value="1"/>
</dbReference>